<feature type="chain" id="PRO_0000356475" description="Large ribosomal subunit protein bL33">
    <location>
        <begin position="1"/>
        <end position="63"/>
    </location>
</feature>
<keyword id="KW-1185">Reference proteome</keyword>
<keyword id="KW-0687">Ribonucleoprotein</keyword>
<keyword id="KW-0689">Ribosomal protein</keyword>
<organism>
    <name type="scientific">Gloeobacter violaceus (strain ATCC 29082 / PCC 7421)</name>
    <dbReference type="NCBI Taxonomy" id="251221"/>
    <lineage>
        <taxon>Bacteria</taxon>
        <taxon>Bacillati</taxon>
        <taxon>Cyanobacteriota</taxon>
        <taxon>Cyanophyceae</taxon>
        <taxon>Gloeobacterales</taxon>
        <taxon>Gloeobacteraceae</taxon>
        <taxon>Gloeobacter</taxon>
    </lineage>
</organism>
<comment type="similarity">
    <text evidence="1">Belongs to the bacterial ribosomal protein bL33 family.</text>
</comment>
<reference key="1">
    <citation type="journal article" date="2003" name="DNA Res.">
        <title>Complete genome structure of Gloeobacter violaceus PCC 7421, a cyanobacterium that lacks thylakoids.</title>
        <authorList>
            <person name="Nakamura Y."/>
            <person name="Kaneko T."/>
            <person name="Sato S."/>
            <person name="Mimuro M."/>
            <person name="Miyashita H."/>
            <person name="Tsuchiya T."/>
            <person name="Sasamoto S."/>
            <person name="Watanabe A."/>
            <person name="Kawashima K."/>
            <person name="Kishida Y."/>
            <person name="Kiyokawa C."/>
            <person name="Kohara M."/>
            <person name="Matsumoto M."/>
            <person name="Matsuno A."/>
            <person name="Nakazaki N."/>
            <person name="Shimpo S."/>
            <person name="Takeuchi C."/>
            <person name="Yamada M."/>
            <person name="Tabata S."/>
        </authorList>
    </citation>
    <scope>NUCLEOTIDE SEQUENCE [LARGE SCALE GENOMIC DNA]</scope>
    <source>
        <strain>ATCC 29082 / PCC 7421</strain>
    </source>
</reference>
<gene>
    <name evidence="1" type="primary">rpmG</name>
    <name evidence="1" type="synonym">rpl33</name>
    <name type="ordered locus">gsl3060</name>
</gene>
<proteinExistence type="inferred from homology"/>
<protein>
    <recommendedName>
        <fullName evidence="1">Large ribosomal subunit protein bL33</fullName>
    </recommendedName>
    <alternativeName>
        <fullName evidence="2">50S ribosomal protein L33</fullName>
    </alternativeName>
</protein>
<name>RL33_GLOVI</name>
<sequence>MAKPGARIIITLECTECRTNTAKRRPGVSRYTTTKNKRNTTGRMELKKFCPNCNKHTVHKETK</sequence>
<dbReference type="EMBL" id="BA000045">
    <property type="protein sequence ID" value="BAC91001.1"/>
    <property type="molecule type" value="Genomic_DNA"/>
</dbReference>
<dbReference type="RefSeq" id="NP_926006.1">
    <property type="nucleotide sequence ID" value="NC_005125.1"/>
</dbReference>
<dbReference type="RefSeq" id="WP_011143053.1">
    <property type="nucleotide sequence ID" value="NC_005125.1"/>
</dbReference>
<dbReference type="SMR" id="Q7NCB9"/>
<dbReference type="FunCoup" id="Q7NCB9">
    <property type="interactions" value="65"/>
</dbReference>
<dbReference type="STRING" id="251221.gene:10760565"/>
<dbReference type="EnsemblBacteria" id="BAC91001">
    <property type="protein sequence ID" value="BAC91001"/>
    <property type="gene ID" value="BAC91001"/>
</dbReference>
<dbReference type="KEGG" id="gvi:gsl3060"/>
<dbReference type="PATRIC" id="fig|251221.4.peg.3090"/>
<dbReference type="eggNOG" id="COG0267">
    <property type="taxonomic scope" value="Bacteria"/>
</dbReference>
<dbReference type="HOGENOM" id="CLU_190949_3_0_3"/>
<dbReference type="InParanoid" id="Q7NCB9"/>
<dbReference type="PhylomeDB" id="Q7NCB9"/>
<dbReference type="Proteomes" id="UP000000557">
    <property type="component" value="Chromosome"/>
</dbReference>
<dbReference type="GO" id="GO:0005737">
    <property type="term" value="C:cytoplasm"/>
    <property type="evidence" value="ECO:0007669"/>
    <property type="project" value="UniProtKB-ARBA"/>
</dbReference>
<dbReference type="GO" id="GO:1990904">
    <property type="term" value="C:ribonucleoprotein complex"/>
    <property type="evidence" value="ECO:0007669"/>
    <property type="project" value="UniProtKB-KW"/>
</dbReference>
<dbReference type="GO" id="GO:0005840">
    <property type="term" value="C:ribosome"/>
    <property type="evidence" value="ECO:0007669"/>
    <property type="project" value="UniProtKB-KW"/>
</dbReference>
<dbReference type="GO" id="GO:0003735">
    <property type="term" value="F:structural constituent of ribosome"/>
    <property type="evidence" value="ECO:0007669"/>
    <property type="project" value="InterPro"/>
</dbReference>
<dbReference type="GO" id="GO:0006412">
    <property type="term" value="P:translation"/>
    <property type="evidence" value="ECO:0007669"/>
    <property type="project" value="UniProtKB-UniRule"/>
</dbReference>
<dbReference type="Gene3D" id="2.20.28.120">
    <property type="entry name" value="Ribosomal protein L33"/>
    <property type="match status" value="1"/>
</dbReference>
<dbReference type="HAMAP" id="MF_00294">
    <property type="entry name" value="Ribosomal_bL33"/>
    <property type="match status" value="1"/>
</dbReference>
<dbReference type="InterPro" id="IPR001705">
    <property type="entry name" value="Ribosomal_bL33"/>
</dbReference>
<dbReference type="InterPro" id="IPR018264">
    <property type="entry name" value="Ribosomal_bL33_CS"/>
</dbReference>
<dbReference type="InterPro" id="IPR038584">
    <property type="entry name" value="Ribosomal_bL33_sf"/>
</dbReference>
<dbReference type="InterPro" id="IPR011332">
    <property type="entry name" value="Ribosomal_zn-bd"/>
</dbReference>
<dbReference type="NCBIfam" id="NF001764">
    <property type="entry name" value="PRK00504.1"/>
    <property type="match status" value="1"/>
</dbReference>
<dbReference type="NCBIfam" id="NF001860">
    <property type="entry name" value="PRK00595.1"/>
    <property type="match status" value="1"/>
</dbReference>
<dbReference type="NCBIfam" id="TIGR01023">
    <property type="entry name" value="rpmG_bact"/>
    <property type="match status" value="1"/>
</dbReference>
<dbReference type="PANTHER" id="PTHR43168">
    <property type="entry name" value="50S RIBOSOMAL PROTEIN L33, CHLOROPLASTIC"/>
    <property type="match status" value="1"/>
</dbReference>
<dbReference type="PANTHER" id="PTHR43168:SF2">
    <property type="entry name" value="LARGE RIBOSOMAL SUBUNIT PROTEIN BL33C"/>
    <property type="match status" value="1"/>
</dbReference>
<dbReference type="Pfam" id="PF00471">
    <property type="entry name" value="Ribosomal_L33"/>
    <property type="match status" value="1"/>
</dbReference>
<dbReference type="SUPFAM" id="SSF57829">
    <property type="entry name" value="Zn-binding ribosomal proteins"/>
    <property type="match status" value="1"/>
</dbReference>
<dbReference type="PROSITE" id="PS00582">
    <property type="entry name" value="RIBOSOMAL_L33"/>
    <property type="match status" value="1"/>
</dbReference>
<evidence type="ECO:0000255" key="1">
    <source>
        <dbReference type="HAMAP-Rule" id="MF_00294"/>
    </source>
</evidence>
<evidence type="ECO:0000305" key="2"/>
<accession>Q7NCB9</accession>